<proteinExistence type="inferred from homology"/>
<comment type="function">
    <text evidence="1">Produces ATP from ADP in the presence of a proton gradient across the membrane. The alpha chain is a regulatory subunit.</text>
</comment>
<comment type="catalytic activity">
    <reaction evidence="1">
        <text>ATP + H2O + 4 H(+)(in) = ADP + phosphate + 5 H(+)(out)</text>
        <dbReference type="Rhea" id="RHEA:57720"/>
        <dbReference type="ChEBI" id="CHEBI:15377"/>
        <dbReference type="ChEBI" id="CHEBI:15378"/>
        <dbReference type="ChEBI" id="CHEBI:30616"/>
        <dbReference type="ChEBI" id="CHEBI:43474"/>
        <dbReference type="ChEBI" id="CHEBI:456216"/>
        <dbReference type="EC" id="7.1.2.2"/>
    </reaction>
</comment>
<comment type="subunit">
    <text evidence="1">F-type ATPases have 2 components, CF(1) - the catalytic core - and CF(0) - the membrane proton channel. CF(1) has five subunits: alpha(3), beta(3), gamma(1), delta(1), epsilon(1). CF(0) has three main subunits: a(1), b(2) and c(9-12). The alpha and beta chains form an alternating ring which encloses part of the gamma chain. CF(1) is attached to CF(0) by a central stalk formed by the gamma and epsilon chains, while a peripheral stalk is formed by the delta and b chains.</text>
</comment>
<comment type="subcellular location">
    <subcellularLocation>
        <location evidence="1">Cell membrane</location>
        <topology evidence="1">Peripheral membrane protein</topology>
    </subcellularLocation>
</comment>
<comment type="similarity">
    <text evidence="1">Belongs to the ATPase alpha/beta chains family.</text>
</comment>
<feature type="chain" id="PRO_0000339061" description="ATP synthase subunit alpha">
    <location>
        <begin position="1"/>
        <end position="500"/>
    </location>
</feature>
<feature type="binding site" evidence="1">
    <location>
        <begin position="168"/>
        <end position="175"/>
    </location>
    <ligand>
        <name>ATP</name>
        <dbReference type="ChEBI" id="CHEBI:30616"/>
    </ligand>
</feature>
<feature type="site" description="Required for activity" evidence="1">
    <location>
        <position position="361"/>
    </location>
</feature>
<sequence length="500" mass="54534">MINAQEISALLKQQIEGFQPDFDYTETGVVTYIGDGIARAQGLDNAMSGELLVFENGTIGMAQNLETNDVGIIILGQFTDIREGSVVRRTGKIMEVPVGSALIGRVINPLGQPVDGLGEIRTSKTRPIEYPAPGVMQRKSVNEPLQTGLKAIDALVPIGRGQRELIIGDRQTGKTSVAIDAILNQKGQDMICIYVAIGQKESTVRTQVETLRQYGALDYTIVVTASASQPSPLLFLAPYAGVAMAEEFMYEGKHVLIVYDDLSKQAVAYRELSLLLRRPPGREAYPGDVFYLHSRLLERSAKVSDELGGGSITALPFIETQAGDISAYIATNVISITDGQIFLKDDLFNSGIRPAIDAGSSVSRVGGSAQIKAMKKVAGTLRIDLASYRELEAFTQFGSDLDAATQAKLNRGRRTVEVLKQPLHKPLPVEKQVLILYALTNGFLDSVPIDDILAFEEELYAYFDLHYDGLLDVIRTTKDLPDTDELNAAIQAFKDQSVFK</sequence>
<keyword id="KW-0066">ATP synthesis</keyword>
<keyword id="KW-0067">ATP-binding</keyword>
<keyword id="KW-1003">Cell membrane</keyword>
<keyword id="KW-0139">CF(1)</keyword>
<keyword id="KW-0375">Hydrogen ion transport</keyword>
<keyword id="KW-0406">Ion transport</keyword>
<keyword id="KW-0472">Membrane</keyword>
<keyword id="KW-0547">Nucleotide-binding</keyword>
<keyword id="KW-1278">Translocase</keyword>
<keyword id="KW-0813">Transport</keyword>
<name>ATPA_STRS2</name>
<organism>
    <name type="scientific">Streptococcus suis (strain 98HAH33)</name>
    <dbReference type="NCBI Taxonomy" id="391296"/>
    <lineage>
        <taxon>Bacteria</taxon>
        <taxon>Bacillati</taxon>
        <taxon>Bacillota</taxon>
        <taxon>Bacilli</taxon>
        <taxon>Lactobacillales</taxon>
        <taxon>Streptococcaceae</taxon>
        <taxon>Streptococcus</taxon>
    </lineage>
</organism>
<accession>A4W1V9</accession>
<reference key="1">
    <citation type="journal article" date="2007" name="PLoS ONE">
        <title>A glimpse of streptococcal toxic shock syndrome from comparative genomics of S. suis 2 Chinese isolates.</title>
        <authorList>
            <person name="Chen C."/>
            <person name="Tang J."/>
            <person name="Dong W."/>
            <person name="Wang C."/>
            <person name="Feng Y."/>
            <person name="Wang J."/>
            <person name="Zheng F."/>
            <person name="Pan X."/>
            <person name="Liu D."/>
            <person name="Li M."/>
            <person name="Song Y."/>
            <person name="Zhu X."/>
            <person name="Sun H."/>
            <person name="Feng T."/>
            <person name="Guo Z."/>
            <person name="Ju A."/>
            <person name="Ge J."/>
            <person name="Dong Y."/>
            <person name="Sun W."/>
            <person name="Jiang Y."/>
            <person name="Wang J."/>
            <person name="Yan J."/>
            <person name="Yang H."/>
            <person name="Wang X."/>
            <person name="Gao G.F."/>
            <person name="Yang R."/>
            <person name="Wang J."/>
            <person name="Yu J."/>
        </authorList>
    </citation>
    <scope>NUCLEOTIDE SEQUENCE [LARGE SCALE GENOMIC DNA]</scope>
    <source>
        <strain>98HAH33</strain>
    </source>
</reference>
<gene>
    <name evidence="1" type="primary">atpA</name>
    <name type="ordered locus">SSU98_1190</name>
</gene>
<dbReference type="EC" id="7.1.2.2" evidence="1"/>
<dbReference type="EMBL" id="CP000408">
    <property type="protein sequence ID" value="ABP92348.1"/>
    <property type="molecule type" value="Genomic_DNA"/>
</dbReference>
<dbReference type="SMR" id="A4W1V9"/>
<dbReference type="KEGG" id="ssv:SSU98_1190"/>
<dbReference type="HOGENOM" id="CLU_010091_2_1_9"/>
<dbReference type="GO" id="GO:0005886">
    <property type="term" value="C:plasma membrane"/>
    <property type="evidence" value="ECO:0007669"/>
    <property type="project" value="UniProtKB-SubCell"/>
</dbReference>
<dbReference type="GO" id="GO:0045259">
    <property type="term" value="C:proton-transporting ATP synthase complex"/>
    <property type="evidence" value="ECO:0007669"/>
    <property type="project" value="UniProtKB-KW"/>
</dbReference>
<dbReference type="GO" id="GO:0043531">
    <property type="term" value="F:ADP binding"/>
    <property type="evidence" value="ECO:0007669"/>
    <property type="project" value="TreeGrafter"/>
</dbReference>
<dbReference type="GO" id="GO:0005524">
    <property type="term" value="F:ATP binding"/>
    <property type="evidence" value="ECO:0007669"/>
    <property type="project" value="UniProtKB-UniRule"/>
</dbReference>
<dbReference type="GO" id="GO:0046933">
    <property type="term" value="F:proton-transporting ATP synthase activity, rotational mechanism"/>
    <property type="evidence" value="ECO:0007669"/>
    <property type="project" value="UniProtKB-UniRule"/>
</dbReference>
<dbReference type="CDD" id="cd18113">
    <property type="entry name" value="ATP-synt_F1_alpha_C"/>
    <property type="match status" value="1"/>
</dbReference>
<dbReference type="CDD" id="cd18116">
    <property type="entry name" value="ATP-synt_F1_alpha_N"/>
    <property type="match status" value="1"/>
</dbReference>
<dbReference type="CDD" id="cd01132">
    <property type="entry name" value="F1-ATPase_alpha_CD"/>
    <property type="match status" value="1"/>
</dbReference>
<dbReference type="FunFam" id="1.20.150.20:FF:000001">
    <property type="entry name" value="ATP synthase subunit alpha"/>
    <property type="match status" value="1"/>
</dbReference>
<dbReference type="FunFam" id="2.40.30.20:FF:000001">
    <property type="entry name" value="ATP synthase subunit alpha"/>
    <property type="match status" value="1"/>
</dbReference>
<dbReference type="FunFam" id="3.40.50.300:FF:000002">
    <property type="entry name" value="ATP synthase subunit alpha"/>
    <property type="match status" value="1"/>
</dbReference>
<dbReference type="Gene3D" id="2.40.30.20">
    <property type="match status" value="1"/>
</dbReference>
<dbReference type="Gene3D" id="1.20.150.20">
    <property type="entry name" value="ATP synthase alpha/beta chain, C-terminal domain"/>
    <property type="match status" value="1"/>
</dbReference>
<dbReference type="Gene3D" id="3.40.50.300">
    <property type="entry name" value="P-loop containing nucleotide triphosphate hydrolases"/>
    <property type="match status" value="1"/>
</dbReference>
<dbReference type="HAMAP" id="MF_01346">
    <property type="entry name" value="ATP_synth_alpha_bact"/>
    <property type="match status" value="1"/>
</dbReference>
<dbReference type="InterPro" id="IPR023366">
    <property type="entry name" value="ATP_synth_asu-like_sf"/>
</dbReference>
<dbReference type="InterPro" id="IPR000793">
    <property type="entry name" value="ATP_synth_asu_C"/>
</dbReference>
<dbReference type="InterPro" id="IPR038376">
    <property type="entry name" value="ATP_synth_asu_C_sf"/>
</dbReference>
<dbReference type="InterPro" id="IPR033732">
    <property type="entry name" value="ATP_synth_F1_a_nt-bd_dom"/>
</dbReference>
<dbReference type="InterPro" id="IPR005294">
    <property type="entry name" value="ATP_synth_F1_asu"/>
</dbReference>
<dbReference type="InterPro" id="IPR004100">
    <property type="entry name" value="ATPase_F1/V1/A1_a/bsu_N"/>
</dbReference>
<dbReference type="InterPro" id="IPR036121">
    <property type="entry name" value="ATPase_F1/V1/A1_a/bsu_N_sf"/>
</dbReference>
<dbReference type="InterPro" id="IPR000194">
    <property type="entry name" value="ATPase_F1/V1/A1_a/bsu_nucl-bd"/>
</dbReference>
<dbReference type="InterPro" id="IPR027417">
    <property type="entry name" value="P-loop_NTPase"/>
</dbReference>
<dbReference type="NCBIfam" id="TIGR00962">
    <property type="entry name" value="atpA"/>
    <property type="match status" value="1"/>
</dbReference>
<dbReference type="NCBIfam" id="NF009884">
    <property type="entry name" value="PRK13343.1"/>
    <property type="match status" value="1"/>
</dbReference>
<dbReference type="PANTHER" id="PTHR48082">
    <property type="entry name" value="ATP SYNTHASE SUBUNIT ALPHA, MITOCHONDRIAL"/>
    <property type="match status" value="1"/>
</dbReference>
<dbReference type="PANTHER" id="PTHR48082:SF2">
    <property type="entry name" value="ATP SYNTHASE SUBUNIT ALPHA, MITOCHONDRIAL"/>
    <property type="match status" value="1"/>
</dbReference>
<dbReference type="Pfam" id="PF00006">
    <property type="entry name" value="ATP-synt_ab"/>
    <property type="match status" value="1"/>
</dbReference>
<dbReference type="Pfam" id="PF00306">
    <property type="entry name" value="ATP-synt_ab_C"/>
    <property type="match status" value="1"/>
</dbReference>
<dbReference type="Pfam" id="PF02874">
    <property type="entry name" value="ATP-synt_ab_N"/>
    <property type="match status" value="1"/>
</dbReference>
<dbReference type="PIRSF" id="PIRSF039088">
    <property type="entry name" value="F_ATPase_subunit_alpha"/>
    <property type="match status" value="1"/>
</dbReference>
<dbReference type="SUPFAM" id="SSF47917">
    <property type="entry name" value="C-terminal domain of alpha and beta subunits of F1 ATP synthase"/>
    <property type="match status" value="1"/>
</dbReference>
<dbReference type="SUPFAM" id="SSF50615">
    <property type="entry name" value="N-terminal domain of alpha and beta subunits of F1 ATP synthase"/>
    <property type="match status" value="1"/>
</dbReference>
<dbReference type="SUPFAM" id="SSF52540">
    <property type="entry name" value="P-loop containing nucleoside triphosphate hydrolases"/>
    <property type="match status" value="1"/>
</dbReference>
<evidence type="ECO:0000255" key="1">
    <source>
        <dbReference type="HAMAP-Rule" id="MF_01346"/>
    </source>
</evidence>
<protein>
    <recommendedName>
        <fullName evidence="1">ATP synthase subunit alpha</fullName>
        <ecNumber evidence="1">7.1.2.2</ecNumber>
    </recommendedName>
    <alternativeName>
        <fullName evidence="1">ATP synthase F1 sector subunit alpha</fullName>
    </alternativeName>
    <alternativeName>
        <fullName evidence="1">F-ATPase subunit alpha</fullName>
    </alternativeName>
</protein>